<protein>
    <recommendedName>
        <fullName evidence="1">Glucosamine-6-phosphate deaminase</fullName>
        <ecNumber evidence="1">3.5.99.6</ecNumber>
    </recommendedName>
    <alternativeName>
        <fullName evidence="1">GlcN6P deaminase</fullName>
        <shortName evidence="1">GNPDA</shortName>
    </alternativeName>
    <alternativeName>
        <fullName evidence="1">Glucosamine-6-phosphate isomerase</fullName>
    </alternativeName>
</protein>
<feature type="chain" id="PRO_0000160155" description="Glucosamine-6-phosphate deaminase">
    <location>
        <begin position="1"/>
        <end position="242"/>
    </location>
</feature>
<feature type="active site" description="Proton acceptor; for enolization step" evidence="1">
    <location>
        <position position="71"/>
    </location>
</feature>
<feature type="active site" description="For ring-opening step" evidence="1">
    <location>
        <position position="142"/>
    </location>
</feature>
<feature type="active site" description="Proton acceptor; for ring-opening step" evidence="1">
    <location>
        <position position="144"/>
    </location>
</feature>
<feature type="active site" description="For ring-opening step" evidence="1">
    <location>
        <position position="149"/>
    </location>
</feature>
<comment type="function">
    <text evidence="1">Catalyzes the reversible isomerization-deamination of glucosamine 6-phosphate (GlcN6P) to form fructose 6-phosphate (Fru6P) and ammonium ion.</text>
</comment>
<comment type="catalytic activity">
    <reaction evidence="1">
        <text>alpha-D-glucosamine 6-phosphate + H2O = beta-D-fructose 6-phosphate + NH4(+)</text>
        <dbReference type="Rhea" id="RHEA:12172"/>
        <dbReference type="ChEBI" id="CHEBI:15377"/>
        <dbReference type="ChEBI" id="CHEBI:28938"/>
        <dbReference type="ChEBI" id="CHEBI:57634"/>
        <dbReference type="ChEBI" id="CHEBI:75989"/>
        <dbReference type="EC" id="3.5.99.6"/>
    </reaction>
</comment>
<comment type="pathway">
    <text evidence="1">Amino-sugar metabolism; N-acetylneuraminate degradation; D-fructose 6-phosphate from N-acetylneuraminate: step 5/5.</text>
</comment>
<comment type="similarity">
    <text evidence="1">Belongs to the glucosamine/galactosamine-6-phosphate isomerase family. NagB subfamily.</text>
</comment>
<proteinExistence type="inferred from homology"/>
<organism>
    <name type="scientific">Malacoplasma penetrans (strain HF-2)</name>
    <name type="common">Mycoplasma penetrans</name>
    <dbReference type="NCBI Taxonomy" id="272633"/>
    <lineage>
        <taxon>Bacteria</taxon>
        <taxon>Bacillati</taxon>
        <taxon>Mycoplasmatota</taxon>
        <taxon>Mycoplasmoidales</taxon>
        <taxon>Mycoplasmoidaceae</taxon>
        <taxon>Malacoplasma</taxon>
    </lineage>
</organism>
<accession>Q8EWM7</accession>
<sequence>MNNNINFIKCSSYEELSKKTANDFITVIKNKPNSVLGLATGSSPMGVYKELIKAYENKEISFRDCVSFNLDEYIGLKKEYEDQTYKYFMNDNLFSKIDINKDNTFFPIDAFSTNMNQDFESYDSKIDSYNGLDILILGIGNNGHIGFNEPGSLIDSKTRMIDLTESTIKANSRFFKSENDVPRKSVTMGLSTILKAKKIVLVVVGDSKKEALNALMNSKSFDSNWPCTALVNHDNVVVYYIG</sequence>
<reference key="1">
    <citation type="journal article" date="2002" name="Nucleic Acids Res.">
        <title>The complete genomic sequence of Mycoplasma penetrans, an intracellular bacterial pathogen in humans.</title>
        <authorList>
            <person name="Sasaki Y."/>
            <person name="Ishikawa J."/>
            <person name="Yamashita A."/>
            <person name="Oshima K."/>
            <person name="Kenri T."/>
            <person name="Furuya K."/>
            <person name="Yoshino C."/>
            <person name="Horino A."/>
            <person name="Shiba T."/>
            <person name="Sasaki T."/>
            <person name="Hattori M."/>
        </authorList>
    </citation>
    <scope>NUCLEOTIDE SEQUENCE [LARGE SCALE GENOMIC DNA]</scope>
    <source>
        <strain>HF-2</strain>
    </source>
</reference>
<dbReference type="EC" id="3.5.99.6" evidence="1"/>
<dbReference type="EMBL" id="BA000026">
    <property type="protein sequence ID" value="BAC43967.1"/>
    <property type="molecule type" value="Genomic_DNA"/>
</dbReference>
<dbReference type="RefSeq" id="WP_011077003.1">
    <property type="nucleotide sequence ID" value="NC_004432.1"/>
</dbReference>
<dbReference type="SMR" id="Q8EWM7"/>
<dbReference type="FunCoup" id="Q8EWM7">
    <property type="interactions" value="149"/>
</dbReference>
<dbReference type="STRING" id="272633.gene:10731275"/>
<dbReference type="KEGG" id="mpe:MYPE1760"/>
<dbReference type="eggNOG" id="COG0363">
    <property type="taxonomic scope" value="Bacteria"/>
</dbReference>
<dbReference type="HOGENOM" id="CLU_049611_1_1_14"/>
<dbReference type="InParanoid" id="Q8EWM7"/>
<dbReference type="UniPathway" id="UPA00629">
    <property type="reaction ID" value="UER00684"/>
</dbReference>
<dbReference type="Proteomes" id="UP000002522">
    <property type="component" value="Chromosome"/>
</dbReference>
<dbReference type="GO" id="GO:0005737">
    <property type="term" value="C:cytoplasm"/>
    <property type="evidence" value="ECO:0007669"/>
    <property type="project" value="TreeGrafter"/>
</dbReference>
<dbReference type="GO" id="GO:0004342">
    <property type="term" value="F:glucosamine-6-phosphate deaminase activity"/>
    <property type="evidence" value="ECO:0007669"/>
    <property type="project" value="UniProtKB-UniRule"/>
</dbReference>
<dbReference type="GO" id="GO:0042802">
    <property type="term" value="F:identical protein binding"/>
    <property type="evidence" value="ECO:0007669"/>
    <property type="project" value="TreeGrafter"/>
</dbReference>
<dbReference type="GO" id="GO:0005975">
    <property type="term" value="P:carbohydrate metabolic process"/>
    <property type="evidence" value="ECO:0007669"/>
    <property type="project" value="InterPro"/>
</dbReference>
<dbReference type="GO" id="GO:0006043">
    <property type="term" value="P:glucosamine catabolic process"/>
    <property type="evidence" value="ECO:0007669"/>
    <property type="project" value="TreeGrafter"/>
</dbReference>
<dbReference type="GO" id="GO:0006046">
    <property type="term" value="P:N-acetylglucosamine catabolic process"/>
    <property type="evidence" value="ECO:0007669"/>
    <property type="project" value="TreeGrafter"/>
</dbReference>
<dbReference type="GO" id="GO:0019262">
    <property type="term" value="P:N-acetylneuraminate catabolic process"/>
    <property type="evidence" value="ECO:0007669"/>
    <property type="project" value="UniProtKB-UniRule"/>
</dbReference>
<dbReference type="CDD" id="cd01399">
    <property type="entry name" value="GlcN6P_deaminase"/>
    <property type="match status" value="1"/>
</dbReference>
<dbReference type="Gene3D" id="3.40.50.1360">
    <property type="match status" value="1"/>
</dbReference>
<dbReference type="HAMAP" id="MF_01241">
    <property type="entry name" value="GlcN6P_deamin"/>
    <property type="match status" value="1"/>
</dbReference>
<dbReference type="InterPro" id="IPR006148">
    <property type="entry name" value="Glc/Gal-6P_isomerase"/>
</dbReference>
<dbReference type="InterPro" id="IPR004547">
    <property type="entry name" value="Glucosamine6P_isomerase"/>
</dbReference>
<dbReference type="InterPro" id="IPR018321">
    <property type="entry name" value="Glucosamine6P_isomerase_CS"/>
</dbReference>
<dbReference type="InterPro" id="IPR037171">
    <property type="entry name" value="NagB/RpiA_transferase-like"/>
</dbReference>
<dbReference type="NCBIfam" id="TIGR00502">
    <property type="entry name" value="nagB"/>
    <property type="match status" value="1"/>
</dbReference>
<dbReference type="PANTHER" id="PTHR11280">
    <property type="entry name" value="GLUCOSAMINE-6-PHOSPHATE ISOMERASE"/>
    <property type="match status" value="1"/>
</dbReference>
<dbReference type="PANTHER" id="PTHR11280:SF5">
    <property type="entry name" value="GLUCOSAMINE-6-PHOSPHATE ISOMERASE"/>
    <property type="match status" value="1"/>
</dbReference>
<dbReference type="Pfam" id="PF01182">
    <property type="entry name" value="Glucosamine_iso"/>
    <property type="match status" value="1"/>
</dbReference>
<dbReference type="SUPFAM" id="SSF100950">
    <property type="entry name" value="NagB/RpiA/CoA transferase-like"/>
    <property type="match status" value="1"/>
</dbReference>
<dbReference type="PROSITE" id="PS01161">
    <property type="entry name" value="GLC_GALNAC_ISOMERASE"/>
    <property type="match status" value="1"/>
</dbReference>
<evidence type="ECO:0000255" key="1">
    <source>
        <dbReference type="HAMAP-Rule" id="MF_01241"/>
    </source>
</evidence>
<gene>
    <name evidence="1" type="primary">nagB</name>
    <name type="ordered locus">MYPE1760</name>
</gene>
<keyword id="KW-0119">Carbohydrate metabolism</keyword>
<keyword id="KW-0378">Hydrolase</keyword>
<keyword id="KW-1185">Reference proteome</keyword>
<name>NAGB_MALP2</name>